<comment type="function">
    <text evidence="1">Acts both as a biotin--[acetyl-CoA-carboxylase] ligase and a repressor.</text>
</comment>
<comment type="catalytic activity">
    <reaction evidence="1">
        <text>biotin + L-lysyl-[protein] + ATP = N(6)-biotinyl-L-lysyl-[protein] + AMP + diphosphate + H(+)</text>
        <dbReference type="Rhea" id="RHEA:11756"/>
        <dbReference type="Rhea" id="RHEA-COMP:9752"/>
        <dbReference type="Rhea" id="RHEA-COMP:10505"/>
        <dbReference type="ChEBI" id="CHEBI:15378"/>
        <dbReference type="ChEBI" id="CHEBI:29969"/>
        <dbReference type="ChEBI" id="CHEBI:30616"/>
        <dbReference type="ChEBI" id="CHEBI:33019"/>
        <dbReference type="ChEBI" id="CHEBI:57586"/>
        <dbReference type="ChEBI" id="CHEBI:83144"/>
        <dbReference type="ChEBI" id="CHEBI:456215"/>
        <dbReference type="EC" id="6.3.4.15"/>
    </reaction>
</comment>
<comment type="similarity">
    <text evidence="1">Belongs to the biotin--protein ligase family.</text>
</comment>
<evidence type="ECO:0000255" key="1">
    <source>
        <dbReference type="HAMAP-Rule" id="MF_00978"/>
    </source>
</evidence>
<evidence type="ECO:0000255" key="2">
    <source>
        <dbReference type="PROSITE-ProRule" id="PRU01067"/>
    </source>
</evidence>
<accession>E0U174</accession>
<accession>P42975</accession>
<reference key="1">
    <citation type="journal article" date="1995" name="J. Bacteriol.">
        <title>Cloning and characterization of the Bacillus subtilis birA gene encoding a repressor of the biotin operon.</title>
        <authorList>
            <person name="Bower S."/>
            <person name="Perkins J.P."/>
            <person name="Yocum R.R."/>
            <person name="Serror P."/>
            <person name="Sorokin A.V."/>
            <person name="Rahaim P."/>
            <person name="Howitt C.L."/>
            <person name="Prasad N."/>
            <person name="Ehrlich S.D."/>
            <person name="Pero J."/>
        </authorList>
    </citation>
    <scope>NUCLEOTIDE SEQUENCE [GENOMIC DNA]</scope>
    <source>
        <strain>ATCC 23059 / NRRL B-14472 / W23</strain>
    </source>
</reference>
<reference key="2">
    <citation type="journal article" date="2011" name="Microbiology">
        <title>The genome sequence of Bacillus subtilis subsp. spizizenii W23: insights into speciation within the B. subtilis complex and into the history of B. subtilis genetics.</title>
        <authorList>
            <person name="Zeigler D.R."/>
        </authorList>
    </citation>
    <scope>NUCLEOTIDE SEQUENCE [LARGE SCALE GENOMIC DNA]</scope>
    <source>
        <strain>ATCC 23059 / NRRL B-14472 / W23</strain>
    </source>
</reference>
<protein>
    <recommendedName>
        <fullName evidence="1">Bifunctional ligase/repressor BirA</fullName>
    </recommendedName>
    <alternativeName>
        <fullName evidence="1">Biotin--[acetyl-CoA-carboxylase] ligase</fullName>
        <ecNumber evidence="1">6.3.4.15</ecNumber>
    </alternativeName>
    <alternativeName>
        <fullName evidence="1">Biotin--protein ligase</fullName>
    </alternativeName>
    <alternativeName>
        <fullName evidence="1">Biotin-[acetyl-CoA carboxylase] synthetase</fullName>
    </alternativeName>
</protein>
<gene>
    <name evidence="1" type="primary">birA</name>
    <name type="ordered locus">BSUW23_11005</name>
</gene>
<name>BIRA_BACSH</name>
<dbReference type="EC" id="6.3.4.15" evidence="1"/>
<dbReference type="EMBL" id="U20445">
    <property type="protein sequence ID" value="AAB60184.1"/>
    <property type="molecule type" value="Genomic_DNA"/>
</dbReference>
<dbReference type="EMBL" id="CP002183">
    <property type="protein sequence ID" value="ADM38241.1"/>
    <property type="molecule type" value="Genomic_DNA"/>
</dbReference>
<dbReference type="RefSeq" id="WP_003225583.1">
    <property type="nucleotide sequence ID" value="NZ_CP148102.1"/>
</dbReference>
<dbReference type="SMR" id="E0U174"/>
<dbReference type="KEGG" id="bss:BSUW23_11005"/>
<dbReference type="HOGENOM" id="CLU_051096_0_0_9"/>
<dbReference type="Proteomes" id="UP000002233">
    <property type="component" value="Chromosome"/>
</dbReference>
<dbReference type="GO" id="GO:0005737">
    <property type="term" value="C:cytoplasm"/>
    <property type="evidence" value="ECO:0007669"/>
    <property type="project" value="TreeGrafter"/>
</dbReference>
<dbReference type="GO" id="GO:0005524">
    <property type="term" value="F:ATP binding"/>
    <property type="evidence" value="ECO:0007669"/>
    <property type="project" value="UniProtKB-UniRule"/>
</dbReference>
<dbReference type="GO" id="GO:0004077">
    <property type="term" value="F:biotin--[biotin carboxyl-carrier protein] ligase activity"/>
    <property type="evidence" value="ECO:0007669"/>
    <property type="project" value="UniProtKB-UniRule"/>
</dbReference>
<dbReference type="GO" id="GO:0003677">
    <property type="term" value="F:DNA binding"/>
    <property type="evidence" value="ECO:0007669"/>
    <property type="project" value="UniProtKB-UniRule"/>
</dbReference>
<dbReference type="GO" id="GO:0016740">
    <property type="term" value="F:transferase activity"/>
    <property type="evidence" value="ECO:0007669"/>
    <property type="project" value="UniProtKB-ARBA"/>
</dbReference>
<dbReference type="GO" id="GO:0036211">
    <property type="term" value="P:protein modification process"/>
    <property type="evidence" value="ECO:0007669"/>
    <property type="project" value="InterPro"/>
</dbReference>
<dbReference type="GO" id="GO:0006355">
    <property type="term" value="P:regulation of DNA-templated transcription"/>
    <property type="evidence" value="ECO:0007669"/>
    <property type="project" value="UniProtKB-UniRule"/>
</dbReference>
<dbReference type="CDD" id="cd16442">
    <property type="entry name" value="BPL"/>
    <property type="match status" value="1"/>
</dbReference>
<dbReference type="Gene3D" id="2.30.30.100">
    <property type="match status" value="1"/>
</dbReference>
<dbReference type="Gene3D" id="3.30.930.10">
    <property type="entry name" value="Bira Bifunctional Protein, Domain 2"/>
    <property type="match status" value="1"/>
</dbReference>
<dbReference type="Gene3D" id="1.10.10.10">
    <property type="entry name" value="Winged helix-like DNA-binding domain superfamily/Winged helix DNA-binding domain"/>
    <property type="match status" value="1"/>
</dbReference>
<dbReference type="HAMAP" id="MF_00978">
    <property type="entry name" value="Bifunct_BirA"/>
    <property type="match status" value="1"/>
</dbReference>
<dbReference type="InterPro" id="IPR045864">
    <property type="entry name" value="aa-tRNA-synth_II/BPL/LPL"/>
</dbReference>
<dbReference type="InterPro" id="IPR030855">
    <property type="entry name" value="Bifunct_BirA"/>
</dbReference>
<dbReference type="InterPro" id="IPR004408">
    <property type="entry name" value="Biotin_CoA_COase_ligase"/>
</dbReference>
<dbReference type="InterPro" id="IPR004409">
    <property type="entry name" value="Biotin_operon_repress_HTH"/>
</dbReference>
<dbReference type="InterPro" id="IPR003142">
    <property type="entry name" value="BPL_C"/>
</dbReference>
<dbReference type="InterPro" id="IPR004143">
    <property type="entry name" value="BPL_LPL_catalytic"/>
</dbReference>
<dbReference type="InterPro" id="IPR013196">
    <property type="entry name" value="HTH_11"/>
</dbReference>
<dbReference type="InterPro" id="IPR008988">
    <property type="entry name" value="Transcriptional_repressor_C"/>
</dbReference>
<dbReference type="InterPro" id="IPR036388">
    <property type="entry name" value="WH-like_DNA-bd_sf"/>
</dbReference>
<dbReference type="InterPro" id="IPR036390">
    <property type="entry name" value="WH_DNA-bd_sf"/>
</dbReference>
<dbReference type="NCBIfam" id="TIGR00121">
    <property type="entry name" value="birA_ligase"/>
    <property type="match status" value="1"/>
</dbReference>
<dbReference type="NCBIfam" id="TIGR00122">
    <property type="entry name" value="birA_repr_reg"/>
    <property type="match status" value="1"/>
</dbReference>
<dbReference type="PANTHER" id="PTHR12835">
    <property type="entry name" value="BIOTIN PROTEIN LIGASE"/>
    <property type="match status" value="1"/>
</dbReference>
<dbReference type="PANTHER" id="PTHR12835:SF5">
    <property type="entry name" value="BIOTIN--PROTEIN LIGASE"/>
    <property type="match status" value="1"/>
</dbReference>
<dbReference type="Pfam" id="PF02237">
    <property type="entry name" value="BPL_C"/>
    <property type="match status" value="1"/>
</dbReference>
<dbReference type="Pfam" id="PF03099">
    <property type="entry name" value="BPL_LplA_LipB"/>
    <property type="match status" value="1"/>
</dbReference>
<dbReference type="Pfam" id="PF08279">
    <property type="entry name" value="HTH_11"/>
    <property type="match status" value="1"/>
</dbReference>
<dbReference type="SUPFAM" id="SSF50037">
    <property type="entry name" value="C-terminal domain of transcriptional repressors"/>
    <property type="match status" value="1"/>
</dbReference>
<dbReference type="SUPFAM" id="SSF55681">
    <property type="entry name" value="Class II aaRS and biotin synthetases"/>
    <property type="match status" value="1"/>
</dbReference>
<dbReference type="SUPFAM" id="SSF46785">
    <property type="entry name" value="Winged helix' DNA-binding domain"/>
    <property type="match status" value="1"/>
</dbReference>
<dbReference type="PROSITE" id="PS51733">
    <property type="entry name" value="BPL_LPL_CATALYTIC"/>
    <property type="match status" value="1"/>
</dbReference>
<feature type="chain" id="PRO_0000403660" description="Bifunctional ligase/repressor BirA">
    <location>
        <begin position="1"/>
        <end position="325"/>
    </location>
</feature>
<feature type="domain" description="BPL/LPL catalytic" evidence="2">
    <location>
        <begin position="74"/>
        <end position="262"/>
    </location>
</feature>
<feature type="DNA-binding region" description="H-T-H motif" evidence="1">
    <location>
        <begin position="23"/>
        <end position="42"/>
    </location>
</feature>
<feature type="binding site" evidence="1">
    <location>
        <position position="118"/>
    </location>
    <ligand>
        <name>biotin</name>
        <dbReference type="ChEBI" id="CHEBI:57586"/>
    </ligand>
</feature>
<feature type="binding site" evidence="1">
    <location>
        <begin position="122"/>
        <end position="124"/>
    </location>
    <ligand>
        <name>biotin</name>
        <dbReference type="ChEBI" id="CHEBI:57586"/>
    </ligand>
</feature>
<feature type="binding site" evidence="1">
    <location>
        <position position="189"/>
    </location>
    <ligand>
        <name>biotin</name>
        <dbReference type="ChEBI" id="CHEBI:57586"/>
    </ligand>
</feature>
<keyword id="KW-0067">ATP-binding</keyword>
<keyword id="KW-0092">Biotin</keyword>
<keyword id="KW-0238">DNA-binding</keyword>
<keyword id="KW-0436">Ligase</keyword>
<keyword id="KW-0547">Nucleotide-binding</keyword>
<keyword id="KW-0678">Repressor</keyword>
<keyword id="KW-0804">Transcription</keyword>
<keyword id="KW-0805">Transcription regulation</keyword>
<organism>
    <name type="scientific">Bacillus spizizenii (strain ATCC 23059 / NRRL B-14472 / W23)</name>
    <name type="common">Bacillus subtilis subsp. spizizenii</name>
    <dbReference type="NCBI Taxonomy" id="655816"/>
    <lineage>
        <taxon>Bacteria</taxon>
        <taxon>Bacillati</taxon>
        <taxon>Bacillota</taxon>
        <taxon>Bacilli</taxon>
        <taxon>Bacillales</taxon>
        <taxon>Bacillaceae</taxon>
        <taxon>Bacillus</taxon>
    </lineage>
</organism>
<sequence>MRSTLRKDLIELFSQAGSEFISGQKISDALGCSRTAVWKHIEELRKEGYEVEAVRRKGYRLIKKPGKLSESEIRFGLKTEVMGQHLIYQDVISSTQKTAHELANNNAPEGTLVVADKQTAGRGRMSRVWHSQEGNGIWMSLILRPDIPLQKTPQLTLLAAVAVVQGIEAAAGIQTDIKWPNDILINGKKTVGILTEMQAEEDRVRSVIIGIGINVNQQSDDFPDELKDIATSLSQASGEKIDRAGVIQHILLCFEKRYRDYMTHGFTPIKLLWESYALGIGTNMRARTLNGTFYGKALGIDDEGVLLLETQEGIKKIYSADIELG</sequence>
<proteinExistence type="inferred from homology"/>